<accession>Q8EA52</accession>
<sequence>MTEWNGEYISPYAEHGKKNEQVKKITVSIPLKVLKVLTDERTRRQVNNLRHATNSELLCEAFLHAYTGQPLPDDADLSKECPDSIPAEAKRLMDEMGIEWEDME</sequence>
<reference key="1">
    <citation type="journal article" date="2002" name="Nat. Biotechnol.">
        <title>Genome sequence of the dissimilatory metal ion-reducing bacterium Shewanella oneidensis.</title>
        <authorList>
            <person name="Heidelberg J.F."/>
            <person name="Paulsen I.T."/>
            <person name="Nelson K.E."/>
            <person name="Gaidos E.J."/>
            <person name="Nelson W.C."/>
            <person name="Read T.D."/>
            <person name="Eisen J.A."/>
            <person name="Seshadri R."/>
            <person name="Ward N.L."/>
            <person name="Methe B.A."/>
            <person name="Clayton R.A."/>
            <person name="Meyer T."/>
            <person name="Tsapin A."/>
            <person name="Scott J."/>
            <person name="Beanan M.J."/>
            <person name="Brinkac L.M."/>
            <person name="Daugherty S.C."/>
            <person name="DeBoy R.T."/>
            <person name="Dodson R.J."/>
            <person name="Durkin A.S."/>
            <person name="Haft D.H."/>
            <person name="Kolonay J.F."/>
            <person name="Madupu R."/>
            <person name="Peterson J.D."/>
            <person name="Umayam L.A."/>
            <person name="White O."/>
            <person name="Wolf A.M."/>
            <person name="Vamathevan J.J."/>
            <person name="Weidman J.F."/>
            <person name="Impraim M."/>
            <person name="Lee K."/>
            <person name="Berry K.J."/>
            <person name="Lee C."/>
            <person name="Mueller J."/>
            <person name="Khouri H.M."/>
            <person name="Gill J."/>
            <person name="Utterback T.R."/>
            <person name="McDonald L.A."/>
            <person name="Feldblyum T.V."/>
            <person name="Smith H.O."/>
            <person name="Venter J.C."/>
            <person name="Nealson K.H."/>
            <person name="Fraser C.M."/>
        </authorList>
    </citation>
    <scope>NUCLEOTIDE SEQUENCE [LARGE SCALE GENOMIC DNA]</scope>
    <source>
        <strain>ATCC 700550 / JCM 31522 / CIP 106686 / LMG 19005 / NCIMB 14063 / MR-1</strain>
    </source>
</reference>
<organism>
    <name type="scientific">Shewanella oneidensis (strain ATCC 700550 / JCM 31522 / CIP 106686 / LMG 19005 / NCIMB 14063 / MR-1)</name>
    <dbReference type="NCBI Taxonomy" id="211586"/>
    <lineage>
        <taxon>Bacteria</taxon>
        <taxon>Pseudomonadati</taxon>
        <taxon>Pseudomonadota</taxon>
        <taxon>Gammaproteobacteria</taxon>
        <taxon>Alteromonadales</taxon>
        <taxon>Shewanellaceae</taxon>
        <taxon>Shewanella</taxon>
    </lineage>
</organism>
<keyword id="KW-0028">Amino-acid biosynthesis</keyword>
<keyword id="KW-0963">Cytoplasm</keyword>
<keyword id="KW-0238">DNA-binding</keyword>
<keyword id="KW-0486">Methionine biosynthesis</keyword>
<keyword id="KW-1185">Reference proteome</keyword>
<keyword id="KW-0678">Repressor</keyword>
<keyword id="KW-0804">Transcription</keyword>
<keyword id="KW-0805">Transcription regulation</keyword>
<evidence type="ECO:0000255" key="1">
    <source>
        <dbReference type="HAMAP-Rule" id="MF_00744"/>
    </source>
</evidence>
<comment type="function">
    <text evidence="1">This regulatory protein, when combined with SAM (S-adenosylmethionine) represses the expression of the methionine regulon and of enzymes involved in SAM synthesis.</text>
</comment>
<comment type="subunit">
    <text evidence="1">Homodimer.</text>
</comment>
<comment type="subcellular location">
    <subcellularLocation>
        <location evidence="1">Cytoplasm</location>
    </subcellularLocation>
</comment>
<comment type="domain">
    <text>Does not bind DNA by a helix-turn-helix motif.</text>
</comment>
<comment type="similarity">
    <text evidence="1">Belongs to the MetJ family.</text>
</comment>
<dbReference type="EMBL" id="AE014299">
    <property type="protein sequence ID" value="AAN57031.1"/>
    <property type="molecule type" value="Genomic_DNA"/>
</dbReference>
<dbReference type="RefSeq" id="NP_719587.1">
    <property type="nucleotide sequence ID" value="NC_004347.2"/>
</dbReference>
<dbReference type="RefSeq" id="WP_011073770.1">
    <property type="nucleotide sequence ID" value="NZ_CP053946.1"/>
</dbReference>
<dbReference type="SMR" id="Q8EA52"/>
<dbReference type="STRING" id="211586.SO_4057"/>
<dbReference type="PaxDb" id="211586-SO_4057"/>
<dbReference type="GeneID" id="75187252"/>
<dbReference type="KEGG" id="son:SO_4057"/>
<dbReference type="PATRIC" id="fig|211586.12.peg.3930"/>
<dbReference type="eggNOG" id="COG3060">
    <property type="taxonomic scope" value="Bacteria"/>
</dbReference>
<dbReference type="HOGENOM" id="CLU_142318_0_0_6"/>
<dbReference type="OrthoDB" id="5680896at2"/>
<dbReference type="PhylomeDB" id="Q8EA52"/>
<dbReference type="BioCyc" id="SONE211586:G1GMP-3754-MONOMER"/>
<dbReference type="Proteomes" id="UP000008186">
    <property type="component" value="Chromosome"/>
</dbReference>
<dbReference type="GO" id="GO:0005737">
    <property type="term" value="C:cytoplasm"/>
    <property type="evidence" value="ECO:0007669"/>
    <property type="project" value="UniProtKB-SubCell"/>
</dbReference>
<dbReference type="GO" id="GO:0003677">
    <property type="term" value="F:DNA binding"/>
    <property type="evidence" value="ECO:0007669"/>
    <property type="project" value="UniProtKB-KW"/>
</dbReference>
<dbReference type="GO" id="GO:0003700">
    <property type="term" value="F:DNA-binding transcription factor activity"/>
    <property type="evidence" value="ECO:0007669"/>
    <property type="project" value="InterPro"/>
</dbReference>
<dbReference type="GO" id="GO:0009086">
    <property type="term" value="P:methionine biosynthetic process"/>
    <property type="evidence" value="ECO:0007669"/>
    <property type="project" value="UniProtKB-UniRule"/>
</dbReference>
<dbReference type="GO" id="GO:0045892">
    <property type="term" value="P:negative regulation of DNA-templated transcription"/>
    <property type="evidence" value="ECO:0007669"/>
    <property type="project" value="UniProtKB-UniRule"/>
</dbReference>
<dbReference type="CDD" id="cd00490">
    <property type="entry name" value="Met_repressor_MetJ"/>
    <property type="match status" value="1"/>
</dbReference>
<dbReference type="Gene3D" id="1.10.140.10">
    <property type="entry name" value="MET Apo-Repressor, subunit A"/>
    <property type="match status" value="1"/>
</dbReference>
<dbReference type="HAMAP" id="MF_00744">
    <property type="entry name" value="MetJ"/>
    <property type="match status" value="1"/>
</dbReference>
<dbReference type="InterPro" id="IPR002084">
    <property type="entry name" value="Met_repressor_MetJ"/>
</dbReference>
<dbReference type="InterPro" id="IPR023453">
    <property type="entry name" value="Met_repressor_MetJ_dom_sf"/>
</dbReference>
<dbReference type="InterPro" id="IPR010985">
    <property type="entry name" value="Ribbon_hlx_hlx"/>
</dbReference>
<dbReference type="NCBIfam" id="NF003622">
    <property type="entry name" value="PRK05264.1"/>
    <property type="match status" value="1"/>
</dbReference>
<dbReference type="Pfam" id="PF01340">
    <property type="entry name" value="MetJ"/>
    <property type="match status" value="1"/>
</dbReference>
<dbReference type="SUPFAM" id="SSF47598">
    <property type="entry name" value="Ribbon-helix-helix"/>
    <property type="match status" value="1"/>
</dbReference>
<feature type="chain" id="PRO_0000198406" description="Met repressor">
    <location>
        <begin position="1"/>
        <end position="104"/>
    </location>
</feature>
<name>METJ_SHEON</name>
<gene>
    <name evidence="1" type="primary">metJ</name>
    <name type="ordered locus">SO_4057</name>
</gene>
<proteinExistence type="inferred from homology"/>
<protein>
    <recommendedName>
        <fullName evidence="1">Met repressor</fullName>
    </recommendedName>
    <alternativeName>
        <fullName evidence="1">Met regulon regulatory protein MetJ</fullName>
    </alternativeName>
</protein>